<reference key="1">
    <citation type="journal article" date="2005" name="Nucleic Acids Res.">
        <title>The genome sequence of Xanthomonas oryzae pathovar oryzae KACC10331, the bacterial blight pathogen of rice.</title>
        <authorList>
            <person name="Lee B.-M."/>
            <person name="Park Y.-J."/>
            <person name="Park D.-S."/>
            <person name="Kang H.-W."/>
            <person name="Kim J.-G."/>
            <person name="Song E.-S."/>
            <person name="Park I.-C."/>
            <person name="Yoon U.-H."/>
            <person name="Hahn J.-H."/>
            <person name="Koo B.-S."/>
            <person name="Lee G.-B."/>
            <person name="Kim H."/>
            <person name="Park H.-S."/>
            <person name="Yoon K.-O."/>
            <person name="Kim J.-H."/>
            <person name="Jung C.-H."/>
            <person name="Koh N.-H."/>
            <person name="Seo J.-S."/>
            <person name="Go S.-J."/>
        </authorList>
    </citation>
    <scope>NUCLEOTIDE SEQUENCE [LARGE SCALE GENOMIC DNA]</scope>
    <source>
        <strain>KACC10331 / KXO85</strain>
    </source>
</reference>
<protein>
    <recommendedName>
        <fullName evidence="1">Protein Smg homolog</fullName>
    </recommendedName>
</protein>
<gene>
    <name evidence="1" type="primary">smg</name>
    <name type="ordered locus">XOO0582</name>
</gene>
<organism>
    <name type="scientific">Xanthomonas oryzae pv. oryzae (strain KACC10331 / KXO85)</name>
    <dbReference type="NCBI Taxonomy" id="291331"/>
    <lineage>
        <taxon>Bacteria</taxon>
        <taxon>Pseudomonadati</taxon>
        <taxon>Pseudomonadota</taxon>
        <taxon>Gammaproteobacteria</taxon>
        <taxon>Lysobacterales</taxon>
        <taxon>Lysobacteraceae</taxon>
        <taxon>Xanthomonas</taxon>
    </lineage>
</organism>
<name>SMG_XANOR</name>
<evidence type="ECO:0000255" key="1">
    <source>
        <dbReference type="HAMAP-Rule" id="MF_00598"/>
    </source>
</evidence>
<feature type="chain" id="PRO_0000209190" description="Protein Smg homolog">
    <location>
        <begin position="1"/>
        <end position="157"/>
    </location>
</feature>
<accession>Q5H5D4</accession>
<comment type="similarity">
    <text evidence="1">Belongs to the Smg family.</text>
</comment>
<keyword id="KW-1185">Reference proteome</keyword>
<proteinExistence type="inferred from homology"/>
<dbReference type="EMBL" id="AE013598">
    <property type="protein sequence ID" value="AAW73836.1"/>
    <property type="molecule type" value="Genomic_DNA"/>
</dbReference>
<dbReference type="SMR" id="Q5H5D4"/>
<dbReference type="STRING" id="291331.XOO0582"/>
<dbReference type="KEGG" id="xoo:XOO0582"/>
<dbReference type="HOGENOM" id="CLU_133242_0_0_6"/>
<dbReference type="Proteomes" id="UP000006735">
    <property type="component" value="Chromosome"/>
</dbReference>
<dbReference type="HAMAP" id="MF_00598">
    <property type="entry name" value="Smg"/>
    <property type="match status" value="1"/>
</dbReference>
<dbReference type="InterPro" id="IPR007456">
    <property type="entry name" value="Smg"/>
</dbReference>
<dbReference type="NCBIfam" id="NF002897">
    <property type="entry name" value="PRK03430.1"/>
    <property type="match status" value="1"/>
</dbReference>
<dbReference type="PANTHER" id="PTHR38692">
    <property type="entry name" value="PROTEIN SMG"/>
    <property type="match status" value="1"/>
</dbReference>
<dbReference type="PANTHER" id="PTHR38692:SF1">
    <property type="entry name" value="PROTEIN SMG"/>
    <property type="match status" value="1"/>
</dbReference>
<dbReference type="Pfam" id="PF04361">
    <property type="entry name" value="DUF494"/>
    <property type="match status" value="1"/>
</dbReference>
<sequence>MKESILDVLLYLFEHYFSEDADLVRDRDSLQNGLIQAGFSPAEISKAFDWLDALSEQRPSVARPHVDGPVRIYHGQELDKLDVDCRGFLLFLEQHRILDADQRELVLDRAMALDQDELDLDDLKWVVLMVLFNQPGAEAAYAWMETQMFLDEPEPVH</sequence>